<sequence>MVKERKTELVEGFRHSVPYINTHRGKTFVIMLGGEAIEHENFSSIVNDIGLLHSLGIRLVVVYGARPQIDANLAAHHHEPLYHKNIRVTDAKTLELVKQAAGTLQLDITARLSMSLNNTPLQGAHINVVSGNFIIAQPLGVDDGVDYCHSGRIRRIDEDAIHRQLDSGAIVLMGPVAVSVTGESFNLTSEEIATQLAIKLKAEKMIGFCSSQGVTNDDGDIVSELFPNEAQARVEAQEEKGDYNSGTVRFLRGAVKACRSGVRRCHLISYQEDGALLQELFSRDGIGTQIVMESAEQIRRATINDIGGILELIRPLEQQGILVRRSREQLEMEIDKFTIIQRDNTTIACAALYPFPEEKIGEMACVAVHPDYRSSSRGEVLLERIAAQAKQSGLSKLFVLTTRSIHWFQERGFTPVDIDLLPESKKQLYNYQRKSKVLMADLG</sequence>
<comment type="catalytic activity">
    <reaction>
        <text>L-glutamate + acetyl-CoA = N-acetyl-L-glutamate + CoA + H(+)</text>
        <dbReference type="Rhea" id="RHEA:24292"/>
        <dbReference type="ChEBI" id="CHEBI:15378"/>
        <dbReference type="ChEBI" id="CHEBI:29985"/>
        <dbReference type="ChEBI" id="CHEBI:44337"/>
        <dbReference type="ChEBI" id="CHEBI:57287"/>
        <dbReference type="ChEBI" id="CHEBI:57288"/>
        <dbReference type="EC" id="2.3.1.1"/>
    </reaction>
</comment>
<comment type="pathway">
    <text>Amino-acid biosynthesis; L-arginine biosynthesis; N(2)-acetyl-L-ornithine from L-glutamate: step 1/4.</text>
</comment>
<comment type="subunit">
    <text evidence="1">Homohexamer.</text>
</comment>
<comment type="subcellular location">
    <subcellularLocation>
        <location evidence="1">Cytoplasm</location>
    </subcellularLocation>
</comment>
<comment type="similarity">
    <text evidence="2">Belongs to the acetyltransferase family. ArgA subfamily.</text>
</comment>
<comment type="sequence caution" evidence="2">
    <conflict type="erroneous initiation">
        <sequence resource="EMBL-CDS" id="AAN81857"/>
    </conflict>
</comment>
<organism>
    <name type="scientific">Escherichia coli O6:H1 (strain CFT073 / ATCC 700928 / UPEC)</name>
    <dbReference type="NCBI Taxonomy" id="199310"/>
    <lineage>
        <taxon>Bacteria</taxon>
        <taxon>Pseudomonadati</taxon>
        <taxon>Pseudomonadota</taxon>
        <taxon>Gammaproteobacteria</taxon>
        <taxon>Enterobacterales</taxon>
        <taxon>Enterobacteriaceae</taxon>
        <taxon>Escherichia</taxon>
    </lineage>
</organism>
<proteinExistence type="inferred from homology"/>
<evidence type="ECO:0000250" key="1"/>
<evidence type="ECO:0000305" key="2"/>
<keyword id="KW-0012">Acyltransferase</keyword>
<keyword id="KW-0028">Amino-acid biosynthesis</keyword>
<keyword id="KW-0055">Arginine biosynthesis</keyword>
<keyword id="KW-0963">Cytoplasm</keyword>
<keyword id="KW-1185">Reference proteome</keyword>
<keyword id="KW-0808">Transferase</keyword>
<name>ARGA_ECOL6</name>
<dbReference type="EC" id="2.3.1.1"/>
<dbReference type="EMBL" id="AE014075">
    <property type="protein sequence ID" value="AAN81857.1"/>
    <property type="status" value="ALT_INIT"/>
    <property type="molecule type" value="Genomic_DNA"/>
</dbReference>
<dbReference type="RefSeq" id="WP_000237947.1">
    <property type="nucleotide sequence ID" value="NZ_CP051263.1"/>
</dbReference>
<dbReference type="SMR" id="P0A6C6"/>
<dbReference type="STRING" id="199310.c3412"/>
<dbReference type="GeneID" id="75203790"/>
<dbReference type="KEGG" id="ecc:c3412"/>
<dbReference type="eggNOG" id="COG0548">
    <property type="taxonomic scope" value="Bacteria"/>
</dbReference>
<dbReference type="eggNOG" id="COG1246">
    <property type="taxonomic scope" value="Bacteria"/>
</dbReference>
<dbReference type="HOGENOM" id="CLU_024773_0_0_6"/>
<dbReference type="UniPathway" id="UPA00068">
    <property type="reaction ID" value="UER00106"/>
</dbReference>
<dbReference type="Proteomes" id="UP000001410">
    <property type="component" value="Chromosome"/>
</dbReference>
<dbReference type="GO" id="GO:0005737">
    <property type="term" value="C:cytoplasm"/>
    <property type="evidence" value="ECO:0007669"/>
    <property type="project" value="UniProtKB-SubCell"/>
</dbReference>
<dbReference type="GO" id="GO:0004042">
    <property type="term" value="F:L-glutamate N-acetyltransferase activity"/>
    <property type="evidence" value="ECO:0007669"/>
    <property type="project" value="UniProtKB-UniRule"/>
</dbReference>
<dbReference type="GO" id="GO:0006526">
    <property type="term" value="P:L-arginine biosynthetic process"/>
    <property type="evidence" value="ECO:0007669"/>
    <property type="project" value="UniProtKB-UniRule"/>
</dbReference>
<dbReference type="CDD" id="cd04237">
    <property type="entry name" value="AAK_NAGS-ABP"/>
    <property type="match status" value="1"/>
</dbReference>
<dbReference type="CDD" id="cd04301">
    <property type="entry name" value="NAT_SF"/>
    <property type="match status" value="1"/>
</dbReference>
<dbReference type="FunFam" id="3.40.1160.10:FF:000005">
    <property type="entry name" value="Amino-acid acetyltransferase"/>
    <property type="match status" value="1"/>
</dbReference>
<dbReference type="FunFam" id="3.40.630.30:FF:000009">
    <property type="entry name" value="Amino-acid acetyltransferase"/>
    <property type="match status" value="1"/>
</dbReference>
<dbReference type="Gene3D" id="3.40.630.30">
    <property type="match status" value="1"/>
</dbReference>
<dbReference type="Gene3D" id="3.40.1160.10">
    <property type="entry name" value="Acetylglutamate kinase-like"/>
    <property type="match status" value="1"/>
</dbReference>
<dbReference type="HAMAP" id="MF_01105">
    <property type="entry name" value="N_acetyl_glu_synth"/>
    <property type="match status" value="1"/>
</dbReference>
<dbReference type="InterPro" id="IPR036393">
    <property type="entry name" value="AceGlu_kinase-like_sf"/>
</dbReference>
<dbReference type="InterPro" id="IPR016181">
    <property type="entry name" value="Acyl_CoA_acyltransferase"/>
</dbReference>
<dbReference type="InterPro" id="IPR001048">
    <property type="entry name" value="Asp/Glu/Uridylate_kinase"/>
</dbReference>
<dbReference type="InterPro" id="IPR000182">
    <property type="entry name" value="GNAT_dom"/>
</dbReference>
<dbReference type="InterPro" id="IPR033719">
    <property type="entry name" value="NAGS_kin"/>
</dbReference>
<dbReference type="InterPro" id="IPR010167">
    <property type="entry name" value="NH2A_AcTrfase"/>
</dbReference>
<dbReference type="NCBIfam" id="TIGR01890">
    <property type="entry name" value="N-Ac-Glu-synth"/>
    <property type="match status" value="1"/>
</dbReference>
<dbReference type="NCBIfam" id="NF003641">
    <property type="entry name" value="PRK05279.1"/>
    <property type="match status" value="1"/>
</dbReference>
<dbReference type="PANTHER" id="PTHR30602">
    <property type="entry name" value="AMINO-ACID ACETYLTRANSFERASE"/>
    <property type="match status" value="1"/>
</dbReference>
<dbReference type="PANTHER" id="PTHR30602:SF12">
    <property type="entry name" value="AMINO-ACID ACETYLTRANSFERASE NAGS1, CHLOROPLASTIC-RELATED"/>
    <property type="match status" value="1"/>
</dbReference>
<dbReference type="Pfam" id="PF00696">
    <property type="entry name" value="AA_kinase"/>
    <property type="match status" value="1"/>
</dbReference>
<dbReference type="Pfam" id="PF00583">
    <property type="entry name" value="Acetyltransf_1"/>
    <property type="match status" value="1"/>
</dbReference>
<dbReference type="PIRSF" id="PIRSF000423">
    <property type="entry name" value="ArgA"/>
    <property type="match status" value="1"/>
</dbReference>
<dbReference type="SUPFAM" id="SSF55729">
    <property type="entry name" value="Acyl-CoA N-acyltransferases (Nat)"/>
    <property type="match status" value="1"/>
</dbReference>
<dbReference type="SUPFAM" id="SSF53633">
    <property type="entry name" value="Carbamate kinase-like"/>
    <property type="match status" value="1"/>
</dbReference>
<dbReference type="PROSITE" id="PS51186">
    <property type="entry name" value="GNAT"/>
    <property type="match status" value="1"/>
</dbReference>
<reference key="1">
    <citation type="journal article" date="2002" name="Proc. Natl. Acad. Sci. U.S.A.">
        <title>Extensive mosaic structure revealed by the complete genome sequence of uropathogenic Escherichia coli.</title>
        <authorList>
            <person name="Welch R.A."/>
            <person name="Burland V."/>
            <person name="Plunkett G. III"/>
            <person name="Redford P."/>
            <person name="Roesch P."/>
            <person name="Rasko D."/>
            <person name="Buckles E.L."/>
            <person name="Liou S.-R."/>
            <person name="Boutin A."/>
            <person name="Hackett J."/>
            <person name="Stroud D."/>
            <person name="Mayhew G.F."/>
            <person name="Rose D.J."/>
            <person name="Zhou S."/>
            <person name="Schwartz D.C."/>
            <person name="Perna N.T."/>
            <person name="Mobley H.L.T."/>
            <person name="Donnenberg M.S."/>
            <person name="Blattner F.R."/>
        </authorList>
    </citation>
    <scope>NUCLEOTIDE SEQUENCE [LARGE SCALE GENOMIC DNA]</scope>
    <source>
        <strain>CFT073 / ATCC 700928 / UPEC</strain>
    </source>
</reference>
<feature type="chain" id="PRO_0000186792" description="Amino-acid acetyltransferase">
    <location>
        <begin position="1"/>
        <end position="443"/>
    </location>
</feature>
<feature type="domain" description="N-acetyltransferase">
    <location>
        <begin position="296"/>
        <end position="443"/>
    </location>
</feature>
<gene>
    <name type="primary">argA</name>
    <name type="ordered locus">c3412</name>
</gene>
<protein>
    <recommendedName>
        <fullName>Amino-acid acetyltransferase</fullName>
        <ecNumber>2.3.1.1</ecNumber>
    </recommendedName>
    <alternativeName>
        <fullName>N-acetylglutamate synthase</fullName>
        <shortName>AGS</shortName>
        <shortName>NAGS</shortName>
    </alternativeName>
</protein>
<accession>P0A6C6</accession>
<accession>O68009</accession>
<accession>O68010</accession>
<accession>O68011</accession>
<accession>O68012</accession>
<accession>O68013</accession>
<accession>P08205</accession>